<dbReference type="EC" id="4.2.1.33" evidence="1"/>
<dbReference type="EMBL" id="CP000511">
    <property type="protein sequence ID" value="ABM12950.1"/>
    <property type="molecule type" value="Genomic_DNA"/>
</dbReference>
<dbReference type="RefSeq" id="WP_011779364.1">
    <property type="nucleotide sequence ID" value="NC_008726.1"/>
</dbReference>
<dbReference type="SMR" id="A1T700"/>
<dbReference type="STRING" id="350058.Mvan_2135"/>
<dbReference type="KEGG" id="mva:Mvan_2135"/>
<dbReference type="eggNOG" id="COG0065">
    <property type="taxonomic scope" value="Bacteria"/>
</dbReference>
<dbReference type="HOGENOM" id="CLU_006714_3_4_11"/>
<dbReference type="UniPathway" id="UPA00048">
    <property type="reaction ID" value="UER00071"/>
</dbReference>
<dbReference type="Proteomes" id="UP000009159">
    <property type="component" value="Chromosome"/>
</dbReference>
<dbReference type="GO" id="GO:0003861">
    <property type="term" value="F:3-isopropylmalate dehydratase activity"/>
    <property type="evidence" value="ECO:0007669"/>
    <property type="project" value="UniProtKB-UniRule"/>
</dbReference>
<dbReference type="GO" id="GO:0051539">
    <property type="term" value="F:4 iron, 4 sulfur cluster binding"/>
    <property type="evidence" value="ECO:0007669"/>
    <property type="project" value="UniProtKB-KW"/>
</dbReference>
<dbReference type="GO" id="GO:0046872">
    <property type="term" value="F:metal ion binding"/>
    <property type="evidence" value="ECO:0007669"/>
    <property type="project" value="UniProtKB-KW"/>
</dbReference>
<dbReference type="GO" id="GO:0009098">
    <property type="term" value="P:L-leucine biosynthetic process"/>
    <property type="evidence" value="ECO:0007669"/>
    <property type="project" value="UniProtKB-UniRule"/>
</dbReference>
<dbReference type="CDD" id="cd01583">
    <property type="entry name" value="IPMI"/>
    <property type="match status" value="1"/>
</dbReference>
<dbReference type="FunFam" id="3.30.499.10:FF:000007">
    <property type="entry name" value="3-isopropylmalate dehydratase large subunit"/>
    <property type="match status" value="1"/>
</dbReference>
<dbReference type="Gene3D" id="3.30.499.10">
    <property type="entry name" value="Aconitase, domain 3"/>
    <property type="match status" value="2"/>
</dbReference>
<dbReference type="HAMAP" id="MF_01026">
    <property type="entry name" value="LeuC_type1"/>
    <property type="match status" value="1"/>
</dbReference>
<dbReference type="InterPro" id="IPR004430">
    <property type="entry name" value="3-IsopropMal_deHydase_lsu"/>
</dbReference>
<dbReference type="InterPro" id="IPR015931">
    <property type="entry name" value="Acnase/IPM_dHydase_lsu_aba_1/3"/>
</dbReference>
<dbReference type="InterPro" id="IPR001030">
    <property type="entry name" value="Acoase/IPM_deHydtase_lsu_aba"/>
</dbReference>
<dbReference type="InterPro" id="IPR018136">
    <property type="entry name" value="Aconitase_4Fe-4S_BS"/>
</dbReference>
<dbReference type="InterPro" id="IPR036008">
    <property type="entry name" value="Aconitase_4Fe-4S_dom"/>
</dbReference>
<dbReference type="InterPro" id="IPR050067">
    <property type="entry name" value="IPM_dehydratase_rel_enz"/>
</dbReference>
<dbReference type="InterPro" id="IPR033941">
    <property type="entry name" value="IPMI_cat"/>
</dbReference>
<dbReference type="NCBIfam" id="TIGR00170">
    <property type="entry name" value="leuC"/>
    <property type="match status" value="1"/>
</dbReference>
<dbReference type="NCBIfam" id="NF004016">
    <property type="entry name" value="PRK05478.1"/>
    <property type="match status" value="1"/>
</dbReference>
<dbReference type="NCBIfam" id="NF009116">
    <property type="entry name" value="PRK12466.1"/>
    <property type="match status" value="1"/>
</dbReference>
<dbReference type="PANTHER" id="PTHR43822:SF9">
    <property type="entry name" value="3-ISOPROPYLMALATE DEHYDRATASE"/>
    <property type="match status" value="1"/>
</dbReference>
<dbReference type="PANTHER" id="PTHR43822">
    <property type="entry name" value="HOMOACONITASE, MITOCHONDRIAL-RELATED"/>
    <property type="match status" value="1"/>
</dbReference>
<dbReference type="Pfam" id="PF00330">
    <property type="entry name" value="Aconitase"/>
    <property type="match status" value="1"/>
</dbReference>
<dbReference type="PRINTS" id="PR00415">
    <property type="entry name" value="ACONITASE"/>
</dbReference>
<dbReference type="SUPFAM" id="SSF53732">
    <property type="entry name" value="Aconitase iron-sulfur domain"/>
    <property type="match status" value="1"/>
</dbReference>
<dbReference type="PROSITE" id="PS00450">
    <property type="entry name" value="ACONITASE_1"/>
    <property type="match status" value="1"/>
</dbReference>
<dbReference type="PROSITE" id="PS01244">
    <property type="entry name" value="ACONITASE_2"/>
    <property type="match status" value="1"/>
</dbReference>
<accession>A1T700</accession>
<protein>
    <recommendedName>
        <fullName evidence="1">3-isopropylmalate dehydratase large subunit</fullName>
        <ecNumber evidence="1">4.2.1.33</ecNumber>
    </recommendedName>
    <alternativeName>
        <fullName evidence="1">Alpha-IPM isomerase</fullName>
        <shortName evidence="1">IPMI</shortName>
    </alternativeName>
    <alternativeName>
        <fullName evidence="1">Isopropylmalate isomerase</fullName>
    </alternativeName>
</protein>
<keyword id="KW-0004">4Fe-4S</keyword>
<keyword id="KW-0028">Amino-acid biosynthesis</keyword>
<keyword id="KW-0100">Branched-chain amino acid biosynthesis</keyword>
<keyword id="KW-0408">Iron</keyword>
<keyword id="KW-0411">Iron-sulfur</keyword>
<keyword id="KW-0432">Leucine biosynthesis</keyword>
<keyword id="KW-0456">Lyase</keyword>
<keyword id="KW-0479">Metal-binding</keyword>
<name>LEUC_MYCVP</name>
<organism>
    <name type="scientific">Mycolicibacterium vanbaalenii (strain DSM 7251 / JCM 13017 / BCRC 16820 / KCTC 9966 / NRRL B-24157 / PYR-1)</name>
    <name type="common">Mycobacterium vanbaalenii</name>
    <dbReference type="NCBI Taxonomy" id="350058"/>
    <lineage>
        <taxon>Bacteria</taxon>
        <taxon>Bacillati</taxon>
        <taxon>Actinomycetota</taxon>
        <taxon>Actinomycetes</taxon>
        <taxon>Mycobacteriales</taxon>
        <taxon>Mycobacteriaceae</taxon>
        <taxon>Mycolicibacterium</taxon>
    </lineage>
</organism>
<feature type="chain" id="PRO_0000319823" description="3-isopropylmalate dehydratase large subunit">
    <location>
        <begin position="1"/>
        <end position="481"/>
    </location>
</feature>
<feature type="binding site" evidence="1">
    <location>
        <position position="357"/>
    </location>
    <ligand>
        <name>[4Fe-4S] cluster</name>
        <dbReference type="ChEBI" id="CHEBI:49883"/>
    </ligand>
</feature>
<feature type="binding site" evidence="1">
    <location>
        <position position="417"/>
    </location>
    <ligand>
        <name>[4Fe-4S] cluster</name>
        <dbReference type="ChEBI" id="CHEBI:49883"/>
    </ligand>
</feature>
<feature type="binding site" evidence="1">
    <location>
        <position position="420"/>
    </location>
    <ligand>
        <name>[4Fe-4S] cluster</name>
        <dbReference type="ChEBI" id="CHEBI:49883"/>
    </ligand>
</feature>
<sequence length="481" mass="51272">MAIVNQPRTLAEKVWSDHVVVAGTGEGAAREPDLIYIDLHLVHEVTSPQAFDGLRLAGRPVRRPDLTIATEDHNVPTVDIDKPIADPVSRTQVETLRRNCAEFGIRLHPMGDVEQGIVHIIGPQLGLTQPGMTVVCGDSHTSTHGAFGALAMGIGTSEVEHVLATQTLPLRPFKTMAVNVDGQLPPGVSAKDIILAVIAKIGTGGGQGHVIEYRGSAIESLSMEGRMTVCNMSIEAGARAGMIAPDETTFEFLRGRPHAPKGAEWDAAVAVWRQLRTDEGAQFDTEIYIDASTLSPFVTWGTNPGQGVPLSDPVPDPELMFDEAERQAAEKALAYMDLRAGTPMRQIPVDTVFVGSCTNGRIEDLRVVADILRGRRVADNVRMLVVPGSMRVRAQAESEGLGEIFTAAGAEWRQAGCSMCLGMNPDQLAPGERCASTSNRNFEGRQGKGGRTHLVSPAVAAATAVRGTLSSPADLAAEPTH</sequence>
<evidence type="ECO:0000255" key="1">
    <source>
        <dbReference type="HAMAP-Rule" id="MF_01026"/>
    </source>
</evidence>
<comment type="function">
    <text evidence="1">Catalyzes the isomerization between 2-isopropylmalate and 3-isopropylmalate, via the formation of 2-isopropylmaleate.</text>
</comment>
<comment type="catalytic activity">
    <reaction evidence="1">
        <text>(2R,3S)-3-isopropylmalate = (2S)-2-isopropylmalate</text>
        <dbReference type="Rhea" id="RHEA:32287"/>
        <dbReference type="ChEBI" id="CHEBI:1178"/>
        <dbReference type="ChEBI" id="CHEBI:35121"/>
        <dbReference type="EC" id="4.2.1.33"/>
    </reaction>
</comment>
<comment type="cofactor">
    <cofactor evidence="1">
        <name>[4Fe-4S] cluster</name>
        <dbReference type="ChEBI" id="CHEBI:49883"/>
    </cofactor>
    <text evidence="1">Binds 1 [4Fe-4S] cluster per subunit.</text>
</comment>
<comment type="pathway">
    <text evidence="1">Amino-acid biosynthesis; L-leucine biosynthesis; L-leucine from 3-methyl-2-oxobutanoate: step 2/4.</text>
</comment>
<comment type="subunit">
    <text evidence="1">Heterodimer of LeuC and LeuD.</text>
</comment>
<comment type="similarity">
    <text evidence="1">Belongs to the aconitase/IPM isomerase family. LeuC type 1 subfamily.</text>
</comment>
<gene>
    <name evidence="1" type="primary">leuC</name>
    <name type="ordered locus">Mvan_2135</name>
</gene>
<reference key="1">
    <citation type="submission" date="2006-12" db="EMBL/GenBank/DDBJ databases">
        <title>Complete sequence of Mycobacterium vanbaalenii PYR-1.</title>
        <authorList>
            <consortium name="US DOE Joint Genome Institute"/>
            <person name="Copeland A."/>
            <person name="Lucas S."/>
            <person name="Lapidus A."/>
            <person name="Barry K."/>
            <person name="Detter J.C."/>
            <person name="Glavina del Rio T."/>
            <person name="Hammon N."/>
            <person name="Israni S."/>
            <person name="Dalin E."/>
            <person name="Tice H."/>
            <person name="Pitluck S."/>
            <person name="Singan V."/>
            <person name="Schmutz J."/>
            <person name="Larimer F."/>
            <person name="Land M."/>
            <person name="Hauser L."/>
            <person name="Kyrpides N."/>
            <person name="Anderson I.J."/>
            <person name="Miller C."/>
            <person name="Richardson P."/>
        </authorList>
    </citation>
    <scope>NUCLEOTIDE SEQUENCE [LARGE SCALE GENOMIC DNA]</scope>
    <source>
        <strain>DSM 7251 / JCM 13017 / BCRC 16820 / KCTC 9966 / NRRL B-24157 / PYR-1</strain>
    </source>
</reference>
<proteinExistence type="inferred from homology"/>